<sequence>MHALVQLRGEVNMHTDIQDTLEMLNIHHVNHCTLVPETDAYRGMVAKVNDFVAFGEPSQETLETVLATRAEPLEGDADVDDEWVAEHTDYDDISGLAFALLSEETTLREQGLSPTLRLHPPRGGHDGVKHPVKEGGQLGKHDTEGIDDLLEAMR</sequence>
<reference key="1">
    <citation type="journal article" date="1989" name="Eur. J. Biochem.">
        <title>Primary structures of five ribosomal proteins from the archaebacterium Halobacterium marismortui and their structural relationships to eubacterial and eukaryotic ribosomal proteins.</title>
        <authorList>
            <person name="Hatakeyama T."/>
            <person name="Kaufmann F."/>
            <person name="Schroeter B."/>
            <person name="Hatakeyama T."/>
        </authorList>
    </citation>
    <scope>PROTEIN SEQUENCE</scope>
</reference>
<reference key="2">
    <citation type="journal article" date="1991" name="Mol. Gen. Genet.">
        <title>Organization and nucleotide sequence of ten ribosomal protein genes from the region equivalent to the spectinomycin operon in the archaebacterium Halobacterium marismortui.</title>
        <authorList>
            <person name="Scholzen T."/>
            <person name="Arndt E."/>
        </authorList>
    </citation>
    <scope>NUCLEOTIDE SEQUENCE [GENOMIC DNA]</scope>
</reference>
<reference key="3">
    <citation type="journal article" date="2004" name="Genome Res.">
        <title>Genome sequence of Haloarcula marismortui: a halophilic archaeon from the Dead Sea.</title>
        <authorList>
            <person name="Baliga N.S."/>
            <person name="Bonneau R."/>
            <person name="Facciotti M.T."/>
            <person name="Pan M."/>
            <person name="Glusman G."/>
            <person name="Deutsch E.W."/>
            <person name="Shannon P."/>
            <person name="Chiu Y."/>
            <person name="Weng R.S."/>
            <person name="Gan R.R."/>
            <person name="Hung P."/>
            <person name="Date S.V."/>
            <person name="Marcotte E."/>
            <person name="Hood L."/>
            <person name="Ng W.V."/>
        </authorList>
    </citation>
    <scope>NUCLEOTIDE SEQUENCE [LARGE SCALE GENOMIC DNA]</scope>
    <source>
        <strain>ATCC 43049 / DSM 3752 / JCM 8966 / VKM B-1809</strain>
    </source>
</reference>
<reference key="4">
    <citation type="journal article" date="1988" name="Biochemistry">
        <title>Extended N-terminal sequencing of proteins of archaebacterial ribosomes blotted from two-dimensional gels onto glass fiber and poly(vinylidene difluoride) membrane.</title>
        <authorList>
            <person name="Walsh M.J."/>
            <person name="McDougall J."/>
            <person name="Wittmann-Liebold B."/>
        </authorList>
    </citation>
    <scope>PROTEIN SEQUENCE OF 1-30</scope>
</reference>
<reference key="5">
    <citation type="journal article" date="2000" name="Science">
        <title>The complete atomic structure of the large ribosomal subunit at 2.4 A resolution.</title>
        <authorList>
            <person name="Ban N."/>
            <person name="Nissen P."/>
            <person name="Hansen J."/>
            <person name="Moore P.B."/>
            <person name="Steitz T.A."/>
        </authorList>
    </citation>
    <scope>X-RAY CRYSTALLOGRAPHY (2.4 ANGSTROMS) OF THE 50S SUBUNIT</scope>
    <source>
        <strain>ATCC 43049 / DSM 3752 / JCM 8966 / VKM B-1809</strain>
    </source>
</reference>
<reference key="6">
    <citation type="journal article" date="2000" name="Science">
        <title>The structural basis of ribosome activity in peptide bond synthesis.</title>
        <authorList>
            <person name="Nissen P."/>
            <person name="Hansen J."/>
            <person name="Ban N."/>
            <person name="Moore P.B."/>
            <person name="Steitz T.A."/>
        </authorList>
    </citation>
    <scope>X-RAY CRYSTALLOGRAPHY (3.0 ANGSTROMS) OF THE 50S SUBUNIT</scope>
    <source>
        <strain>ATCC 43049 / DSM 3752 / JCM 8966 / VKM B-1809</strain>
    </source>
</reference>
<reference key="7">
    <citation type="journal article" date="2002" name="Nat. Struct. Biol.">
        <title>A pre-translocational intermediate in protein synthesis observed in crystals of enzymatically active 50S subunits.</title>
        <authorList>
            <person name="Schmeing T.M."/>
            <person name="Seila A.C."/>
            <person name="Hansen J.L."/>
            <person name="Freeborn B."/>
            <person name="Soukup J.K."/>
            <person name="Scaringe S.A."/>
            <person name="Strobel S.A."/>
            <person name="Moore P.B."/>
            <person name="Steitz T.A."/>
        </authorList>
    </citation>
    <scope>X-RAY CRYSTALLOGRAPHY (3.1 ANGSTROMS) OF THE 50S SUBUNIT</scope>
    <source>
        <strain>ATCC 43049 / DSM 3752 / JCM 8966 / VKM B-1809</strain>
    </source>
</reference>
<reference key="8">
    <citation type="journal article" date="2001" name="EMBO J.">
        <title>The kink-turn: a new RNA secondary structure motif.</title>
        <authorList>
            <person name="Klein D.J."/>
            <person name="Schmeing T.M."/>
            <person name="Moore P.B."/>
            <person name="Steitz T.A."/>
        </authorList>
    </citation>
    <scope>X-RAY CRYSTALLOGRAPHY (2.4 ANGSTROMS) OF THE 50S SUBUNIT</scope>
    <source>
        <strain>ATCC 43049 / DSM 3752 / JCM 8966 / VKM B-1809</strain>
    </source>
</reference>
<reference key="9">
    <citation type="journal article" date="2002" name="Mol. Cell">
        <title>The structures of four macrolide antibiotics bound to the large ribosomal subunit.</title>
        <authorList>
            <person name="Hansen J.L."/>
            <person name="Ippolito J.A."/>
            <person name="Ban N."/>
            <person name="Nissen P."/>
            <person name="Moore P.B."/>
            <person name="Steitz T.A."/>
        </authorList>
    </citation>
    <scope>X-RAY CRYSTALLOGRAPHY (3.0 ANGSTROMS) OF THE 50S SUBUNIT IN COMPLEX WITH FOUR MACROLIDE ANTIBIOTICS</scope>
    <source>
        <strain>ATCC 43049 / DSM 3752 / JCM 8966 / VKM B-1809</strain>
    </source>
</reference>
<reference key="10">
    <citation type="journal article" date="2002" name="Proc. Natl. Acad. Sci. U.S.A.">
        <title>Structural insights into peptide bond formation.</title>
        <authorList>
            <person name="Hansen J.L."/>
            <person name="Schmeing T.M."/>
            <person name="Moore P.B."/>
            <person name="Steitz T.A."/>
        </authorList>
    </citation>
    <scope>X-RAY CRYSTALLOGRAPHY (2.8 ANGSTROMS) OF THE 50S SUBUNIT</scope>
    <source>
        <strain>ATCC 43049 / DSM 3752 / JCM 8966 / VKM B-1809</strain>
    </source>
</reference>
<reference key="11">
    <citation type="journal article" date="2003" name="J. Mol. Biol.">
        <title>Structures of five antibiotics bound at the peptidyl transferase center of the large ribosomal subunit.</title>
        <authorList>
            <person name="Hansen J.L."/>
            <person name="Moore P.B."/>
            <person name="Steitz T.A."/>
        </authorList>
    </citation>
    <scope>X-RAY CRYSTALLOGRAPHY (3.0 ANGSTROMS) OF THE 50S SUBUNIT IN COMPLEX WITH FIVE ANTIBIOTICS AT THE PEPTIDYL TRANSFERASE CENTER</scope>
    <source>
        <strain>ATCC 43049 / DSM 3752 / JCM 8966 / VKM B-1809</strain>
    </source>
</reference>
<reference key="12">
    <citation type="journal article" date="2003" name="RNA">
        <title>Structures of deacylated tRNA mimics bound to the E site of the large ribosomal subunit.</title>
        <authorList>
            <person name="Schmeing T.M."/>
            <person name="Moore P.B."/>
            <person name="Steitz T.A."/>
        </authorList>
    </citation>
    <scope>X-RAY CRYSTALLOGRAPHY (2.9 ANGSTROMS) OF THE 50S SUBUNIT WITH TWO DIFFERENT E SITE SUBSTRATES</scope>
</reference>
<reference key="13">
    <citation type="journal article" date="2013" name="Acta Crystallogr. D">
        <title>Revisiting the Haloarcula marismortui 50S ribosomal subunit model.</title>
        <authorList>
            <person name="Gabdulkhakov A."/>
            <person name="Nikonov S."/>
            <person name="Garber M."/>
        </authorList>
    </citation>
    <scope>X-RAY CRYSTALLOGRAPHY (2.4 ANGSTROMS) OF THE 50S SUBUNIT</scope>
</reference>
<evidence type="ECO:0000255" key="1">
    <source>
        <dbReference type="HAMAP-Rule" id="MF_01371"/>
    </source>
</evidence>
<evidence type="ECO:0000256" key="2">
    <source>
        <dbReference type="SAM" id="MobiDB-lite"/>
    </source>
</evidence>
<evidence type="ECO:0000269" key="3">
    <source>
    </source>
</evidence>
<evidence type="ECO:0000269" key="4">
    <source>
    </source>
</evidence>
<evidence type="ECO:0000305" key="5"/>
<evidence type="ECO:0007829" key="6">
    <source>
        <dbReference type="PDB" id="1VQ8"/>
    </source>
</evidence>
<evidence type="ECO:0007829" key="7">
    <source>
        <dbReference type="PDB" id="1VQO"/>
    </source>
</evidence>
<proteinExistence type="evidence at protein level"/>
<name>RL30_HALMA</name>
<gene>
    <name evidence="1" type="primary">rpl30</name>
    <name type="ordered locus">rrnAC1591</name>
</gene>
<keyword id="KW-0002">3D-structure</keyword>
<keyword id="KW-0903">Direct protein sequencing</keyword>
<keyword id="KW-1185">Reference proteome</keyword>
<keyword id="KW-0687">Ribonucleoprotein</keyword>
<keyword id="KW-0689">Ribosomal protein</keyword>
<keyword id="KW-0694">RNA-binding</keyword>
<keyword id="KW-0699">rRNA-binding</keyword>
<accession>P14121</accession>
<accession>Q5V1U3</accession>
<protein>
    <recommendedName>
        <fullName evidence="1">Large ribosomal subunit protein uL30</fullName>
    </recommendedName>
    <alternativeName>
        <fullName evidence="5">50S ribosomal protein L30</fullName>
    </alternativeName>
    <alternativeName>
        <fullName>Hl16</fullName>
    </alternativeName>
    <alternativeName>
        <fullName>Hl20</fullName>
    </alternativeName>
    <alternativeName>
        <fullName>Hmal30</fullName>
    </alternativeName>
</protein>
<organism>
    <name type="scientific">Haloarcula marismortui (strain ATCC 43049 / DSM 3752 / JCM 8966 / VKM B-1809)</name>
    <name type="common">Halobacterium marismortui</name>
    <dbReference type="NCBI Taxonomy" id="272569"/>
    <lineage>
        <taxon>Archaea</taxon>
        <taxon>Methanobacteriati</taxon>
        <taxon>Methanobacteriota</taxon>
        <taxon>Stenosarchaea group</taxon>
        <taxon>Halobacteria</taxon>
        <taxon>Halobacteriales</taxon>
        <taxon>Haloarculaceae</taxon>
        <taxon>Haloarcula</taxon>
    </lineage>
</organism>
<dbReference type="EMBL" id="X58395">
    <property type="protein sequence ID" value="CAA41292.1"/>
    <property type="molecule type" value="Genomic_DNA"/>
</dbReference>
<dbReference type="EMBL" id="AY596297">
    <property type="protein sequence ID" value="AAV46509.1"/>
    <property type="molecule type" value="Genomic_DNA"/>
</dbReference>
<dbReference type="PIR" id="S16543">
    <property type="entry name" value="R5HS30"/>
</dbReference>
<dbReference type="PDB" id="1FFK">
    <property type="method" value="X-ray"/>
    <property type="resolution" value="2.40 A"/>
    <property type="chains" value="T=1-154"/>
</dbReference>
<dbReference type="PDB" id="1JJ2">
    <property type="method" value="X-ray"/>
    <property type="resolution" value="2.40 A"/>
    <property type="chains" value="V=1-154"/>
</dbReference>
<dbReference type="PDB" id="1K73">
    <property type="method" value="X-ray"/>
    <property type="resolution" value="3.01 A"/>
    <property type="chains" value="X=1-154"/>
</dbReference>
<dbReference type="PDB" id="1K8A">
    <property type="method" value="X-ray"/>
    <property type="resolution" value="3.00 A"/>
    <property type="chains" value="X=1-154"/>
</dbReference>
<dbReference type="PDB" id="1K9M">
    <property type="method" value="X-ray"/>
    <property type="resolution" value="3.00 A"/>
    <property type="chains" value="X=1-154"/>
</dbReference>
<dbReference type="PDB" id="1KC8">
    <property type="method" value="X-ray"/>
    <property type="resolution" value="3.01 A"/>
    <property type="chains" value="X=1-154"/>
</dbReference>
<dbReference type="PDB" id="1KD1">
    <property type="method" value="X-ray"/>
    <property type="resolution" value="3.00 A"/>
    <property type="chains" value="X=1-154"/>
</dbReference>
<dbReference type="PDB" id="1KQS">
    <property type="method" value="X-ray"/>
    <property type="resolution" value="3.10 A"/>
    <property type="chains" value="V=1-154"/>
</dbReference>
<dbReference type="PDB" id="1M1K">
    <property type="method" value="X-ray"/>
    <property type="resolution" value="3.20 A"/>
    <property type="chains" value="X=1-154"/>
</dbReference>
<dbReference type="PDB" id="1M90">
    <property type="method" value="X-ray"/>
    <property type="resolution" value="2.80 A"/>
    <property type="chains" value="X=1-154"/>
</dbReference>
<dbReference type="PDB" id="1N8R">
    <property type="method" value="X-ray"/>
    <property type="resolution" value="3.00 A"/>
    <property type="chains" value="X=1-154"/>
</dbReference>
<dbReference type="PDB" id="1NJI">
    <property type="method" value="X-ray"/>
    <property type="resolution" value="3.00 A"/>
    <property type="chains" value="X=1-154"/>
</dbReference>
<dbReference type="PDB" id="1Q7Y">
    <property type="method" value="X-ray"/>
    <property type="resolution" value="3.20 A"/>
    <property type="chains" value="X=1-154"/>
</dbReference>
<dbReference type="PDB" id="1Q81">
    <property type="method" value="X-ray"/>
    <property type="resolution" value="2.95 A"/>
    <property type="chains" value="X=1-154"/>
</dbReference>
<dbReference type="PDB" id="1Q82">
    <property type="method" value="X-ray"/>
    <property type="resolution" value="2.98 A"/>
    <property type="chains" value="X=1-154"/>
</dbReference>
<dbReference type="PDB" id="1Q86">
    <property type="method" value="X-ray"/>
    <property type="resolution" value="3.00 A"/>
    <property type="chains" value="X=1-154"/>
</dbReference>
<dbReference type="PDB" id="1QVF">
    <property type="method" value="X-ray"/>
    <property type="resolution" value="3.10 A"/>
    <property type="chains" value="V=1-154"/>
</dbReference>
<dbReference type="PDB" id="1QVG">
    <property type="method" value="X-ray"/>
    <property type="resolution" value="2.90 A"/>
    <property type="chains" value="V=1-154"/>
</dbReference>
<dbReference type="PDB" id="1S72">
    <property type="method" value="X-ray"/>
    <property type="resolution" value="2.40 A"/>
    <property type="chains" value="W=1-154"/>
</dbReference>
<dbReference type="PDB" id="1VQ4">
    <property type="method" value="X-ray"/>
    <property type="resolution" value="2.70 A"/>
    <property type="chains" value="W=1-154"/>
</dbReference>
<dbReference type="PDB" id="1VQ5">
    <property type="method" value="X-ray"/>
    <property type="resolution" value="2.60 A"/>
    <property type="chains" value="W=1-154"/>
</dbReference>
<dbReference type="PDB" id="1VQ6">
    <property type="method" value="X-ray"/>
    <property type="resolution" value="2.70 A"/>
    <property type="chains" value="W=1-154"/>
</dbReference>
<dbReference type="PDB" id="1VQ7">
    <property type="method" value="X-ray"/>
    <property type="resolution" value="2.50 A"/>
    <property type="chains" value="W=1-154"/>
</dbReference>
<dbReference type="PDB" id="1VQ8">
    <property type="method" value="X-ray"/>
    <property type="resolution" value="2.20 A"/>
    <property type="chains" value="W=1-154"/>
</dbReference>
<dbReference type="PDB" id="1VQ9">
    <property type="method" value="X-ray"/>
    <property type="resolution" value="2.40 A"/>
    <property type="chains" value="W=1-154"/>
</dbReference>
<dbReference type="PDB" id="1VQK">
    <property type="method" value="X-ray"/>
    <property type="resolution" value="2.30 A"/>
    <property type="chains" value="W=1-154"/>
</dbReference>
<dbReference type="PDB" id="1VQL">
    <property type="method" value="X-ray"/>
    <property type="resolution" value="2.30 A"/>
    <property type="chains" value="W=1-154"/>
</dbReference>
<dbReference type="PDB" id="1VQM">
    <property type="method" value="X-ray"/>
    <property type="resolution" value="2.30 A"/>
    <property type="chains" value="W=1-154"/>
</dbReference>
<dbReference type="PDB" id="1VQN">
    <property type="method" value="X-ray"/>
    <property type="resolution" value="2.40 A"/>
    <property type="chains" value="W=1-154"/>
</dbReference>
<dbReference type="PDB" id="1VQO">
    <property type="method" value="X-ray"/>
    <property type="resolution" value="2.20 A"/>
    <property type="chains" value="W=1-154"/>
</dbReference>
<dbReference type="PDB" id="1VQP">
    <property type="method" value="X-ray"/>
    <property type="resolution" value="2.25 A"/>
    <property type="chains" value="W=1-154"/>
</dbReference>
<dbReference type="PDB" id="1W2B">
    <property type="method" value="X-ray"/>
    <property type="resolution" value="3.50 A"/>
    <property type="chains" value="V=1-154"/>
</dbReference>
<dbReference type="PDB" id="1YHQ">
    <property type="method" value="X-ray"/>
    <property type="resolution" value="2.40 A"/>
    <property type="chains" value="W=1-154"/>
</dbReference>
<dbReference type="PDB" id="1YI2">
    <property type="method" value="X-ray"/>
    <property type="resolution" value="2.65 A"/>
    <property type="chains" value="W=1-154"/>
</dbReference>
<dbReference type="PDB" id="1YIJ">
    <property type="method" value="X-ray"/>
    <property type="resolution" value="2.60 A"/>
    <property type="chains" value="W=1-154"/>
</dbReference>
<dbReference type="PDB" id="1YIT">
    <property type="method" value="X-ray"/>
    <property type="resolution" value="2.80 A"/>
    <property type="chains" value="W=1-154"/>
</dbReference>
<dbReference type="PDB" id="1YJ9">
    <property type="method" value="X-ray"/>
    <property type="resolution" value="2.90 A"/>
    <property type="chains" value="W=1-154"/>
</dbReference>
<dbReference type="PDB" id="1YJN">
    <property type="method" value="X-ray"/>
    <property type="resolution" value="3.00 A"/>
    <property type="chains" value="W=1-154"/>
</dbReference>
<dbReference type="PDB" id="1YJW">
    <property type="method" value="X-ray"/>
    <property type="resolution" value="2.90 A"/>
    <property type="chains" value="W=1-154"/>
</dbReference>
<dbReference type="PDB" id="2OTJ">
    <property type="method" value="X-ray"/>
    <property type="resolution" value="2.90 A"/>
    <property type="chains" value="W=1-154"/>
</dbReference>
<dbReference type="PDB" id="2OTL">
    <property type="method" value="X-ray"/>
    <property type="resolution" value="2.70 A"/>
    <property type="chains" value="W=1-154"/>
</dbReference>
<dbReference type="PDB" id="2QA4">
    <property type="method" value="X-ray"/>
    <property type="resolution" value="3.00 A"/>
    <property type="chains" value="W=1-154"/>
</dbReference>
<dbReference type="PDB" id="2QEX">
    <property type="method" value="X-ray"/>
    <property type="resolution" value="2.90 A"/>
    <property type="chains" value="W=1-154"/>
</dbReference>
<dbReference type="PDB" id="3CC2">
    <property type="method" value="X-ray"/>
    <property type="resolution" value="2.40 A"/>
    <property type="chains" value="W=1-154"/>
</dbReference>
<dbReference type="PDB" id="3CC4">
    <property type="method" value="X-ray"/>
    <property type="resolution" value="2.70 A"/>
    <property type="chains" value="W=1-154"/>
</dbReference>
<dbReference type="PDB" id="3CC7">
    <property type="method" value="X-ray"/>
    <property type="resolution" value="2.70 A"/>
    <property type="chains" value="W=1-154"/>
</dbReference>
<dbReference type="PDB" id="3CCE">
    <property type="method" value="X-ray"/>
    <property type="resolution" value="2.75 A"/>
    <property type="chains" value="W=1-154"/>
</dbReference>
<dbReference type="PDB" id="3CCJ">
    <property type="method" value="X-ray"/>
    <property type="resolution" value="2.70 A"/>
    <property type="chains" value="W=1-154"/>
</dbReference>
<dbReference type="PDB" id="3CCL">
    <property type="method" value="X-ray"/>
    <property type="resolution" value="2.90 A"/>
    <property type="chains" value="W=1-154"/>
</dbReference>
<dbReference type="PDB" id="3CCM">
    <property type="method" value="X-ray"/>
    <property type="resolution" value="2.55 A"/>
    <property type="chains" value="W=1-154"/>
</dbReference>
<dbReference type="PDB" id="3CCQ">
    <property type="method" value="X-ray"/>
    <property type="resolution" value="2.90 A"/>
    <property type="chains" value="W=1-154"/>
</dbReference>
<dbReference type="PDB" id="3CCR">
    <property type="method" value="X-ray"/>
    <property type="resolution" value="3.00 A"/>
    <property type="chains" value="W=1-154"/>
</dbReference>
<dbReference type="PDB" id="3CCS">
    <property type="method" value="X-ray"/>
    <property type="resolution" value="2.95 A"/>
    <property type="chains" value="W=1-154"/>
</dbReference>
<dbReference type="PDB" id="3CCU">
    <property type="method" value="X-ray"/>
    <property type="resolution" value="2.80 A"/>
    <property type="chains" value="W=1-154"/>
</dbReference>
<dbReference type="PDB" id="3CCV">
    <property type="method" value="X-ray"/>
    <property type="resolution" value="2.90 A"/>
    <property type="chains" value="W=1-154"/>
</dbReference>
<dbReference type="PDB" id="3CD6">
    <property type="method" value="X-ray"/>
    <property type="resolution" value="2.75 A"/>
    <property type="chains" value="W=1-154"/>
</dbReference>
<dbReference type="PDB" id="3CMA">
    <property type="method" value="X-ray"/>
    <property type="resolution" value="2.80 A"/>
    <property type="chains" value="W=1-154"/>
</dbReference>
<dbReference type="PDB" id="3CME">
    <property type="method" value="X-ray"/>
    <property type="resolution" value="2.95 A"/>
    <property type="chains" value="W=1-154"/>
</dbReference>
<dbReference type="PDB" id="3CPW">
    <property type="method" value="X-ray"/>
    <property type="resolution" value="2.70 A"/>
    <property type="chains" value="V=1-154"/>
</dbReference>
<dbReference type="PDB" id="3CXC">
    <property type="method" value="X-ray"/>
    <property type="resolution" value="3.00 A"/>
    <property type="chains" value="V=1-154"/>
</dbReference>
<dbReference type="PDB" id="3G4S">
    <property type="method" value="X-ray"/>
    <property type="resolution" value="3.20 A"/>
    <property type="chains" value="W=1-154"/>
</dbReference>
<dbReference type="PDB" id="3G6E">
    <property type="method" value="X-ray"/>
    <property type="resolution" value="2.70 A"/>
    <property type="chains" value="W=1-154"/>
</dbReference>
<dbReference type="PDB" id="3G71">
    <property type="method" value="X-ray"/>
    <property type="resolution" value="2.85 A"/>
    <property type="chains" value="W=1-154"/>
</dbReference>
<dbReference type="PDB" id="3I55">
    <property type="method" value="X-ray"/>
    <property type="resolution" value="3.11 A"/>
    <property type="chains" value="W=1-154"/>
</dbReference>
<dbReference type="PDB" id="3I56">
    <property type="method" value="X-ray"/>
    <property type="resolution" value="2.90 A"/>
    <property type="chains" value="W=1-154"/>
</dbReference>
<dbReference type="PDB" id="3OW2">
    <property type="method" value="X-ray"/>
    <property type="resolution" value="2.70 A"/>
    <property type="chains" value="V=1-154"/>
</dbReference>
<dbReference type="PDB" id="4ADX">
    <property type="method" value="EM"/>
    <property type="resolution" value="6.60 A"/>
    <property type="chains" value="W=1-154"/>
</dbReference>
<dbReference type="PDB" id="4V9F">
    <property type="method" value="X-ray"/>
    <property type="resolution" value="2.40 A"/>
    <property type="chains" value="W=1-154"/>
</dbReference>
<dbReference type="PDBsum" id="1FFK"/>
<dbReference type="PDBsum" id="1JJ2"/>
<dbReference type="PDBsum" id="1K73"/>
<dbReference type="PDBsum" id="1K8A"/>
<dbReference type="PDBsum" id="1K9M"/>
<dbReference type="PDBsum" id="1KC8"/>
<dbReference type="PDBsum" id="1KD1"/>
<dbReference type="PDBsum" id="1KQS"/>
<dbReference type="PDBsum" id="1M1K"/>
<dbReference type="PDBsum" id="1M90"/>
<dbReference type="PDBsum" id="1N8R"/>
<dbReference type="PDBsum" id="1NJI"/>
<dbReference type="PDBsum" id="1Q7Y"/>
<dbReference type="PDBsum" id="1Q81"/>
<dbReference type="PDBsum" id="1Q82"/>
<dbReference type="PDBsum" id="1Q86"/>
<dbReference type="PDBsum" id="1QVF"/>
<dbReference type="PDBsum" id="1QVG"/>
<dbReference type="PDBsum" id="1S72"/>
<dbReference type="PDBsum" id="1VQ4"/>
<dbReference type="PDBsum" id="1VQ5"/>
<dbReference type="PDBsum" id="1VQ6"/>
<dbReference type="PDBsum" id="1VQ7"/>
<dbReference type="PDBsum" id="1VQ8"/>
<dbReference type="PDBsum" id="1VQ9"/>
<dbReference type="PDBsum" id="1VQK"/>
<dbReference type="PDBsum" id="1VQL"/>
<dbReference type="PDBsum" id="1VQM"/>
<dbReference type="PDBsum" id="1VQN"/>
<dbReference type="PDBsum" id="1VQO"/>
<dbReference type="PDBsum" id="1VQP"/>
<dbReference type="PDBsum" id="1W2B"/>
<dbReference type="PDBsum" id="1YHQ"/>
<dbReference type="PDBsum" id="1YI2"/>
<dbReference type="PDBsum" id="1YIJ"/>
<dbReference type="PDBsum" id="1YIT"/>
<dbReference type="PDBsum" id="1YJ9"/>
<dbReference type="PDBsum" id="1YJN"/>
<dbReference type="PDBsum" id="1YJW"/>
<dbReference type="PDBsum" id="2OTJ"/>
<dbReference type="PDBsum" id="2OTL"/>
<dbReference type="PDBsum" id="2QA4"/>
<dbReference type="PDBsum" id="2QEX"/>
<dbReference type="PDBsum" id="3CC2"/>
<dbReference type="PDBsum" id="3CC4"/>
<dbReference type="PDBsum" id="3CC7"/>
<dbReference type="PDBsum" id="3CCE"/>
<dbReference type="PDBsum" id="3CCJ"/>
<dbReference type="PDBsum" id="3CCL"/>
<dbReference type="PDBsum" id="3CCM"/>
<dbReference type="PDBsum" id="3CCQ"/>
<dbReference type="PDBsum" id="3CCR"/>
<dbReference type="PDBsum" id="3CCS"/>
<dbReference type="PDBsum" id="3CCU"/>
<dbReference type="PDBsum" id="3CCV"/>
<dbReference type="PDBsum" id="3CD6"/>
<dbReference type="PDBsum" id="3CMA"/>
<dbReference type="PDBsum" id="3CME"/>
<dbReference type="PDBsum" id="3CPW"/>
<dbReference type="PDBsum" id="3CXC"/>
<dbReference type="PDBsum" id="3G4S"/>
<dbReference type="PDBsum" id="3G6E"/>
<dbReference type="PDBsum" id="3G71"/>
<dbReference type="PDBsum" id="3I55"/>
<dbReference type="PDBsum" id="3I56"/>
<dbReference type="PDBsum" id="3OW2"/>
<dbReference type="PDBsum" id="4ADX"/>
<dbReference type="PDBsum" id="4V9F"/>
<dbReference type="SMR" id="P14121"/>
<dbReference type="IntAct" id="P14121">
    <property type="interactions" value="2"/>
</dbReference>
<dbReference type="STRING" id="272569.rrnAC1591"/>
<dbReference type="PaxDb" id="272569-rrnAC1591"/>
<dbReference type="EnsemblBacteria" id="AAV46509">
    <property type="protein sequence ID" value="AAV46509"/>
    <property type="gene ID" value="rrnAC1591"/>
</dbReference>
<dbReference type="KEGG" id="hma:rrnAC1591"/>
<dbReference type="PATRIC" id="fig|272569.17.peg.2280"/>
<dbReference type="eggNOG" id="arCOG04086">
    <property type="taxonomic scope" value="Archaea"/>
</dbReference>
<dbReference type="HOGENOM" id="CLU_055156_6_0_2"/>
<dbReference type="EvolutionaryTrace" id="P14121"/>
<dbReference type="Proteomes" id="UP000001169">
    <property type="component" value="Chromosome I"/>
</dbReference>
<dbReference type="GO" id="GO:0022625">
    <property type="term" value="C:cytosolic large ribosomal subunit"/>
    <property type="evidence" value="ECO:0007669"/>
    <property type="project" value="TreeGrafter"/>
</dbReference>
<dbReference type="GO" id="GO:0019843">
    <property type="term" value="F:rRNA binding"/>
    <property type="evidence" value="ECO:0007669"/>
    <property type="project" value="UniProtKB-KW"/>
</dbReference>
<dbReference type="GO" id="GO:0003735">
    <property type="term" value="F:structural constituent of ribosome"/>
    <property type="evidence" value="ECO:0007669"/>
    <property type="project" value="InterPro"/>
</dbReference>
<dbReference type="GO" id="GO:0000463">
    <property type="term" value="P:maturation of LSU-rRNA from tricistronic rRNA transcript (SSU-rRNA, 5.8S rRNA, LSU-rRNA)"/>
    <property type="evidence" value="ECO:0007669"/>
    <property type="project" value="TreeGrafter"/>
</dbReference>
<dbReference type="GO" id="GO:0006412">
    <property type="term" value="P:translation"/>
    <property type="evidence" value="ECO:0007669"/>
    <property type="project" value="UniProtKB-UniRule"/>
</dbReference>
<dbReference type="CDD" id="cd01657">
    <property type="entry name" value="Ribosomal_L7_archeal_euk"/>
    <property type="match status" value="1"/>
</dbReference>
<dbReference type="Gene3D" id="1.10.15.30">
    <property type="match status" value="1"/>
</dbReference>
<dbReference type="Gene3D" id="3.30.1390.20">
    <property type="entry name" value="Ribosomal protein L30, ferredoxin-like fold domain"/>
    <property type="match status" value="1"/>
</dbReference>
<dbReference type="HAMAP" id="MF_01371_A">
    <property type="entry name" value="Ribosomal_uL30_A"/>
    <property type="match status" value="1"/>
</dbReference>
<dbReference type="InterPro" id="IPR036919">
    <property type="entry name" value="Ribo_uL30_ferredoxin-like_sf"/>
</dbReference>
<dbReference type="InterPro" id="IPR039699">
    <property type="entry name" value="Ribosomal_uL30"/>
</dbReference>
<dbReference type="InterPro" id="IPR005997">
    <property type="entry name" value="Ribosomal_uL30_arc"/>
</dbReference>
<dbReference type="InterPro" id="IPR018038">
    <property type="entry name" value="Ribosomal_uL30_CS"/>
</dbReference>
<dbReference type="InterPro" id="IPR035808">
    <property type="entry name" value="Ribosomal_uL30_euk_arc"/>
</dbReference>
<dbReference type="InterPro" id="IPR016082">
    <property type="entry name" value="Ribosomal_uL30_ferredoxin-like"/>
</dbReference>
<dbReference type="NCBIfam" id="NF004711">
    <property type="entry name" value="PRK06049.1"/>
    <property type="match status" value="1"/>
</dbReference>
<dbReference type="NCBIfam" id="TIGR01309">
    <property type="entry name" value="uL30_arch"/>
    <property type="match status" value="1"/>
</dbReference>
<dbReference type="PANTHER" id="PTHR11524">
    <property type="entry name" value="60S RIBOSOMAL PROTEIN L7"/>
    <property type="match status" value="1"/>
</dbReference>
<dbReference type="PANTHER" id="PTHR11524:SF16">
    <property type="entry name" value="LARGE RIBOSOMAL SUBUNIT PROTEIN UL30"/>
    <property type="match status" value="1"/>
</dbReference>
<dbReference type="Pfam" id="PF00327">
    <property type="entry name" value="Ribosomal_L30"/>
    <property type="match status" value="1"/>
</dbReference>
<dbReference type="SUPFAM" id="SSF55129">
    <property type="entry name" value="Ribosomal protein L30p/L7e"/>
    <property type="match status" value="1"/>
</dbReference>
<dbReference type="PROSITE" id="PS00634">
    <property type="entry name" value="RIBOSOMAL_L30"/>
    <property type="match status" value="1"/>
</dbReference>
<comment type="function">
    <text>This is one of 5 proteins that mediate the attachment of the 5S rRNA onto the large ribosomal subunit, stabilizing the orientation of adjacent RNA domains.</text>
</comment>
<comment type="subunit">
    <text evidence="1 3 4">Part of the 50S ribosomal subunit. Binds 5S rRNA.</text>
</comment>
<comment type="similarity">
    <text evidence="1">Belongs to the universal ribosomal protein uL30 family.</text>
</comment>
<feature type="chain" id="PRO_0000104622" description="Large ribosomal subunit protein uL30">
    <location>
        <begin position="1"/>
        <end position="154"/>
    </location>
</feature>
<feature type="region of interest" description="Disordered" evidence="2">
    <location>
        <begin position="114"/>
        <end position="146"/>
    </location>
</feature>
<feature type="compositionally biased region" description="Basic and acidic residues" evidence="2">
    <location>
        <begin position="123"/>
        <end position="144"/>
    </location>
</feature>
<feature type="sequence conflict" description="In Ref. 1; AA sequence." evidence="5" ref="1">
    <original>W</original>
    <variation>L</variation>
    <location>
        <position position="83"/>
    </location>
</feature>
<feature type="sequence conflict" description="In Ref. 1; AA sequence." evidence="5" ref="1">
    <location>
        <position position="148"/>
    </location>
</feature>
<feature type="strand" evidence="6">
    <location>
        <begin position="2"/>
        <end position="6"/>
    </location>
</feature>
<feature type="helix" evidence="6">
    <location>
        <begin position="15"/>
        <end position="23"/>
    </location>
</feature>
<feature type="strand" evidence="6">
    <location>
        <begin position="31"/>
        <end position="35"/>
    </location>
</feature>
<feature type="helix" evidence="6">
    <location>
        <begin position="39"/>
        <end position="47"/>
    </location>
</feature>
<feature type="helix" evidence="6">
    <location>
        <begin position="49"/>
        <end position="51"/>
    </location>
</feature>
<feature type="strand" evidence="6">
    <location>
        <begin position="52"/>
        <end position="55"/>
    </location>
</feature>
<feature type="helix" evidence="6">
    <location>
        <begin position="59"/>
        <end position="69"/>
    </location>
</feature>
<feature type="strand" evidence="6">
    <location>
        <begin position="72"/>
        <end position="75"/>
    </location>
</feature>
<feature type="helix" evidence="6">
    <location>
        <begin position="81"/>
        <end position="87"/>
    </location>
</feature>
<feature type="strand" evidence="6">
    <location>
        <begin position="88"/>
        <end position="92"/>
    </location>
</feature>
<feature type="helix" evidence="6">
    <location>
        <begin position="93"/>
        <end position="101"/>
    </location>
</feature>
<feature type="helix" evidence="6">
    <location>
        <begin position="108"/>
        <end position="110"/>
    </location>
</feature>
<feature type="strand" evidence="7">
    <location>
        <begin position="114"/>
        <end position="117"/>
    </location>
</feature>
<feature type="strand" evidence="6">
    <location>
        <begin position="128"/>
        <end position="131"/>
    </location>
</feature>
<feature type="helix" evidence="6">
    <location>
        <begin position="132"/>
        <end position="134"/>
    </location>
</feature>
<feature type="strand" evidence="6">
    <location>
        <begin position="137"/>
        <end position="140"/>
    </location>
</feature>
<feature type="helix" evidence="6">
    <location>
        <begin position="143"/>
        <end position="152"/>
    </location>
</feature>